<comment type="function">
    <text evidence="1">DNA helicase which seems to act as a postreplicative transcription termination factor. Involved in ATP-dependent release of nascent RNA. Forms a stable complex with single-stranded DNA, and to a lesser extent RNA (By similarity).</text>
</comment>
<comment type="subunit">
    <text evidence="1">Interacts with G2. Might be part of a transcription complex composed at least of G2, A18, and H5.</text>
</comment>
<comment type="subcellular location">
    <subcellularLocation>
        <location evidence="1">Virion</location>
    </subcellularLocation>
    <text evidence="1">Localizes to the virion core.</text>
</comment>
<comment type="similarity">
    <text evidence="3">Belongs to the helicase family. Poxviruses subfamily.</text>
</comment>
<sequence>MSLLKMEYNLYTELKKMTCGQSLSLFNEDGDFVEVEPGSSFKFLIPKGFYSSPSVKTSLVFDTLTTTDNKITSINPTNAPKLYPIQCKVVSEVVSNMRKMIELKRPLYITLHLACGFGKTITTCYLMAIHGRKTVICVPNKMLIHQWKTQVEAVGLEHKISIDGVSILLKELKTQSPDVLIVVSRHLTNDAFCKYINKHYDLFILDESHTYNLMNNTAVTRFLAYYPPMMCYFLTATPRPSNRIYCNSIINIAKLSDLKKTIYVVDSFFEPYSTDNIRHMIKRLDGASNKYHIYTEKLLSVDEPRNQLILNTLVEEFKSGTINRILVITKLREHMVLFYKRLLNLFGPEVVFIGDAQNRRTPDMVKSIKELNRFIFVSTLFYSGTGLDIPSLDSLFICSAVINNMQIEQLLGRVCRETALLDRRVYVFPNTSIKEIKYMIGNFVQRIISLSVDKLGFKQESYRKHQESDPTSACTTSSREERVLNRIFNSQNR</sequence>
<reference key="1">
    <citation type="journal article" date="2002" name="Virology">
        <title>The genome of camelpox virus.</title>
        <authorList>
            <person name="Afonso C.L."/>
            <person name="Tulman E.R."/>
            <person name="Lu Z."/>
            <person name="Zsak L."/>
            <person name="Sandybaev N.T."/>
            <person name="Kerembekova U.Z."/>
            <person name="Zaitsev V.L."/>
            <person name="Kutish G.F."/>
            <person name="Rock D.L."/>
        </authorList>
    </citation>
    <scope>NUCLEOTIDE SEQUENCE [LARGE SCALE GENOMIC DNA]</scope>
</reference>
<accession>Q8V2N7</accession>
<protein>
    <recommendedName>
        <fullName>Transcript termination protein A18</fullName>
        <ecNumber>3.6.4.-</ecNumber>
    </recommendedName>
</protein>
<feature type="chain" id="PRO_0000102181" description="Transcript termination protein A18">
    <location>
        <begin position="1"/>
        <end position="493"/>
    </location>
</feature>
<feature type="domain" description="Helicase ATP-binding" evidence="2">
    <location>
        <begin position="100"/>
        <end position="256"/>
    </location>
</feature>
<feature type="short sequence motif" description="DESH box">
    <location>
        <begin position="206"/>
        <end position="209"/>
    </location>
</feature>
<feature type="binding site" evidence="2">
    <location>
        <begin position="113"/>
        <end position="120"/>
    </location>
    <ligand>
        <name>ATP</name>
        <dbReference type="ChEBI" id="CHEBI:30616"/>
    </ligand>
</feature>
<evidence type="ECO:0000250" key="1"/>
<evidence type="ECO:0000255" key="2">
    <source>
        <dbReference type="PROSITE-ProRule" id="PRU00541"/>
    </source>
</evidence>
<evidence type="ECO:0000305" key="3"/>
<gene>
    <name type="ordered locus">CMLV136</name>
</gene>
<organismHost>
    <name type="scientific">Camelus</name>
    <dbReference type="NCBI Taxonomy" id="9836"/>
</organismHost>
<name>A18_CAMPM</name>
<organism>
    <name type="scientific">Camelpox virus (strain M-96)</name>
    <dbReference type="NCBI Taxonomy" id="203173"/>
    <lineage>
        <taxon>Viruses</taxon>
        <taxon>Varidnaviria</taxon>
        <taxon>Bamfordvirae</taxon>
        <taxon>Nucleocytoviricota</taxon>
        <taxon>Pokkesviricetes</taxon>
        <taxon>Chitovirales</taxon>
        <taxon>Poxviridae</taxon>
        <taxon>Chordopoxvirinae</taxon>
        <taxon>Orthopoxvirus</taxon>
        <taxon>Camelpox virus</taxon>
    </lineage>
</organism>
<proteinExistence type="inferred from homology"/>
<keyword id="KW-0067">ATP-binding</keyword>
<keyword id="KW-0238">DNA-binding</keyword>
<keyword id="KW-0347">Helicase</keyword>
<keyword id="KW-0378">Hydrolase</keyword>
<keyword id="KW-0426">Late protein</keyword>
<keyword id="KW-0547">Nucleotide-binding</keyword>
<keyword id="KW-0804">Transcription</keyword>
<keyword id="KW-0946">Virion</keyword>
<dbReference type="EC" id="3.6.4.-"/>
<dbReference type="EMBL" id="AF438165">
    <property type="protein sequence ID" value="AAL73843.1"/>
    <property type="molecule type" value="Genomic_DNA"/>
</dbReference>
<dbReference type="RefSeq" id="NP_570526.1">
    <property type="nucleotide sequence ID" value="NC_003391.1"/>
</dbReference>
<dbReference type="KEGG" id="vg:932665"/>
<dbReference type="Proteomes" id="UP000152221">
    <property type="component" value="Genome"/>
</dbReference>
<dbReference type="GO" id="GO:0044423">
    <property type="term" value="C:virion component"/>
    <property type="evidence" value="ECO:0007669"/>
    <property type="project" value="UniProtKB-KW"/>
</dbReference>
<dbReference type="GO" id="GO:0005524">
    <property type="term" value="F:ATP binding"/>
    <property type="evidence" value="ECO:0007669"/>
    <property type="project" value="UniProtKB-KW"/>
</dbReference>
<dbReference type="GO" id="GO:0003677">
    <property type="term" value="F:DNA binding"/>
    <property type="evidence" value="ECO:0007669"/>
    <property type="project" value="UniProtKB-KW"/>
</dbReference>
<dbReference type="GO" id="GO:0004386">
    <property type="term" value="F:helicase activity"/>
    <property type="evidence" value="ECO:0007669"/>
    <property type="project" value="UniProtKB-KW"/>
</dbReference>
<dbReference type="GO" id="GO:0016787">
    <property type="term" value="F:hydrolase activity"/>
    <property type="evidence" value="ECO:0007669"/>
    <property type="project" value="UniProtKB-KW"/>
</dbReference>
<dbReference type="CDD" id="cd18785">
    <property type="entry name" value="SF2_C"/>
    <property type="match status" value="1"/>
</dbReference>
<dbReference type="Gene3D" id="3.40.50.300">
    <property type="entry name" value="P-loop containing nucleotide triphosphate hydrolases"/>
    <property type="match status" value="2"/>
</dbReference>
<dbReference type="InterPro" id="IPR006935">
    <property type="entry name" value="Helicase/UvrB_N"/>
</dbReference>
<dbReference type="InterPro" id="IPR014001">
    <property type="entry name" value="Helicase_ATP-bd"/>
</dbReference>
<dbReference type="InterPro" id="IPR050742">
    <property type="entry name" value="Helicase_Restrict-Modif_Enz"/>
</dbReference>
<dbReference type="InterPro" id="IPR027417">
    <property type="entry name" value="P-loop_NTPase"/>
</dbReference>
<dbReference type="PANTHER" id="PTHR47396:SF1">
    <property type="entry name" value="ATP-DEPENDENT HELICASE IRC3-RELATED"/>
    <property type="match status" value="1"/>
</dbReference>
<dbReference type="PANTHER" id="PTHR47396">
    <property type="entry name" value="TYPE I RESTRICTION ENZYME ECOKI R PROTEIN"/>
    <property type="match status" value="1"/>
</dbReference>
<dbReference type="Pfam" id="PF04851">
    <property type="entry name" value="ResIII"/>
    <property type="match status" value="1"/>
</dbReference>
<dbReference type="SMART" id="SM00487">
    <property type="entry name" value="DEXDc"/>
    <property type="match status" value="1"/>
</dbReference>
<dbReference type="SUPFAM" id="SSF52540">
    <property type="entry name" value="P-loop containing nucleoside triphosphate hydrolases"/>
    <property type="match status" value="1"/>
</dbReference>
<dbReference type="PROSITE" id="PS51192">
    <property type="entry name" value="HELICASE_ATP_BIND_1"/>
    <property type="match status" value="1"/>
</dbReference>